<feature type="chain" id="PRO_0000082717" description="Dexamethasone-induced Ras-related protein 1">
    <location>
        <begin position="1"/>
        <end position="278"/>
    </location>
</feature>
<feature type="propeptide" id="PRO_0000281372" description="Removed in mature form" evidence="1">
    <location>
        <begin position="279"/>
        <end position="281"/>
    </location>
</feature>
<feature type="short sequence motif" description="Effector region">
    <location>
        <begin position="53"/>
        <end position="61"/>
    </location>
</feature>
<feature type="binding site" evidence="1">
    <location>
        <begin position="31"/>
        <end position="38"/>
    </location>
    <ligand>
        <name>GTP</name>
        <dbReference type="ChEBI" id="CHEBI:37565"/>
    </ligand>
</feature>
<feature type="binding site" evidence="1">
    <location>
        <begin position="78"/>
        <end position="82"/>
    </location>
    <ligand>
        <name>GTP</name>
        <dbReference type="ChEBI" id="CHEBI:37565"/>
    </ligand>
</feature>
<feature type="binding site" evidence="1">
    <location>
        <begin position="145"/>
        <end position="148"/>
    </location>
    <ligand>
        <name>GTP</name>
        <dbReference type="ChEBI" id="CHEBI:37565"/>
    </ligand>
</feature>
<feature type="modified residue" description="S-nitrosocysteine" evidence="3">
    <location>
        <position position="11"/>
    </location>
</feature>
<feature type="modified residue" description="Cysteine methyl ester" evidence="1">
    <location>
        <position position="278"/>
    </location>
</feature>
<feature type="lipid moiety-binding region" description="S-farnesyl cysteine" evidence="1">
    <location>
        <position position="278"/>
    </location>
</feature>
<feature type="splice variant" id="VSP_046431" description="In isoform 2." evidence="5">
    <original>GDVFILVFSLDNRDSFEEVQRLRQQIL</original>
    <variation>DPRHQVLPQEQNQGERGRAPGHLRQQG</variation>
    <location>
        <begin position="96"/>
        <end position="122"/>
    </location>
</feature>
<feature type="splice variant" id="VSP_046432" description="In isoform 2." evidence="5">
    <location>
        <begin position="123"/>
        <end position="281"/>
    </location>
</feature>
<feature type="mutagenesis site" description="Suppresses NO-induced activation." evidence="3">
    <original>C</original>
    <variation>S</variation>
    <location>
        <position position="11"/>
    </location>
</feature>
<feature type="sequence conflict" description="In Ref. 5; AAF72997." evidence="6" ref="5">
    <original>R</original>
    <variation>K</variation>
    <location>
        <position position="118"/>
    </location>
</feature>
<name>RASD1_HUMAN</name>
<keyword id="KW-0025">Alternative splicing</keyword>
<keyword id="KW-1003">Cell membrane</keyword>
<keyword id="KW-0963">Cytoplasm</keyword>
<keyword id="KW-0342">GTP-binding</keyword>
<keyword id="KW-0449">Lipoprotein</keyword>
<keyword id="KW-0472">Membrane</keyword>
<keyword id="KW-0488">Methylation</keyword>
<keyword id="KW-0547">Nucleotide-binding</keyword>
<keyword id="KW-0539">Nucleus</keyword>
<keyword id="KW-0636">Prenylation</keyword>
<keyword id="KW-1267">Proteomics identification</keyword>
<keyword id="KW-1185">Reference proteome</keyword>
<keyword id="KW-0702">S-nitrosylation</keyword>
<dbReference type="EMBL" id="AF153192">
    <property type="protein sequence ID" value="AAD34621.1"/>
    <property type="molecule type" value="mRNA"/>
</dbReference>
<dbReference type="EMBL" id="AF172846">
    <property type="protein sequence ID" value="AAF01364.1"/>
    <property type="molecule type" value="mRNA"/>
</dbReference>
<dbReference type="EMBL" id="AF069506">
    <property type="protein sequence ID" value="AAD34206.1"/>
    <property type="molecule type" value="mRNA"/>
</dbReference>
<dbReference type="EMBL" id="AF222979">
    <property type="protein sequence ID" value="AAG44256.1"/>
    <property type="molecule type" value="Genomic_DNA"/>
</dbReference>
<dbReference type="EMBL" id="AF262018">
    <property type="protein sequence ID" value="AAF72997.1"/>
    <property type="molecule type" value="Genomic_DNA"/>
</dbReference>
<dbReference type="EMBL" id="AF498923">
    <property type="protein sequence ID" value="AAM21071.1"/>
    <property type="molecule type" value="mRNA"/>
</dbReference>
<dbReference type="EMBL" id="AK294073">
    <property type="protein sequence ID" value="BAG57415.1"/>
    <property type="molecule type" value="mRNA"/>
</dbReference>
<dbReference type="EMBL" id="AK312796">
    <property type="protein sequence ID" value="BAG35656.1"/>
    <property type="molecule type" value="mRNA"/>
</dbReference>
<dbReference type="EMBL" id="AC073621">
    <property type="status" value="NOT_ANNOTATED_CDS"/>
    <property type="molecule type" value="Genomic_DNA"/>
</dbReference>
<dbReference type="EMBL" id="CH471196">
    <property type="protein sequence ID" value="EAW55705.1"/>
    <property type="molecule type" value="Genomic_DNA"/>
</dbReference>
<dbReference type="EMBL" id="BC018041">
    <property type="protein sequence ID" value="AAH18041.1"/>
    <property type="molecule type" value="mRNA"/>
</dbReference>
<dbReference type="CCDS" id="CCDS11185.1">
    <molecule id="Q9Y272-1"/>
</dbReference>
<dbReference type="CCDS" id="CCDS58519.1">
    <molecule id="Q9Y272-2"/>
</dbReference>
<dbReference type="RefSeq" id="NP_001186918.1">
    <molecule id="Q9Y272-2"/>
    <property type="nucleotide sequence ID" value="NM_001199989.2"/>
</dbReference>
<dbReference type="RefSeq" id="NP_057168.1">
    <molecule id="Q9Y272-1"/>
    <property type="nucleotide sequence ID" value="NM_016084.5"/>
</dbReference>
<dbReference type="SMR" id="Q9Y272"/>
<dbReference type="BioGRID" id="119662">
    <property type="interactions" value="39"/>
</dbReference>
<dbReference type="FunCoup" id="Q9Y272">
    <property type="interactions" value="1331"/>
</dbReference>
<dbReference type="IntAct" id="Q9Y272">
    <property type="interactions" value="34"/>
</dbReference>
<dbReference type="MINT" id="Q9Y272"/>
<dbReference type="STRING" id="9606.ENSP00000225688"/>
<dbReference type="iPTMnet" id="Q9Y272"/>
<dbReference type="PhosphoSitePlus" id="Q9Y272"/>
<dbReference type="BioMuta" id="RASD1"/>
<dbReference type="DMDM" id="38258272"/>
<dbReference type="MassIVE" id="Q9Y272"/>
<dbReference type="PaxDb" id="9606-ENSP00000225688"/>
<dbReference type="PeptideAtlas" id="Q9Y272"/>
<dbReference type="Antibodypedia" id="25457">
    <property type="antibodies" value="85 antibodies from 22 providers"/>
</dbReference>
<dbReference type="DNASU" id="51655"/>
<dbReference type="Ensembl" id="ENST00000225688.4">
    <molecule id="Q9Y272-1"/>
    <property type="protein sequence ID" value="ENSP00000225688.3"/>
    <property type="gene ID" value="ENSG00000108551.5"/>
</dbReference>
<dbReference type="Ensembl" id="ENST00000579152.1">
    <molecule id="Q9Y272-2"/>
    <property type="protein sequence ID" value="ENSP00000463388.1"/>
    <property type="gene ID" value="ENSG00000108551.5"/>
</dbReference>
<dbReference type="GeneID" id="51655"/>
<dbReference type="KEGG" id="hsa:51655"/>
<dbReference type="MANE-Select" id="ENST00000225688.4">
    <property type="protein sequence ID" value="ENSP00000225688.3"/>
    <property type="RefSeq nucleotide sequence ID" value="NM_016084.5"/>
    <property type="RefSeq protein sequence ID" value="NP_057168.1"/>
</dbReference>
<dbReference type="UCSC" id="uc002gri.4">
    <molecule id="Q9Y272-1"/>
    <property type="organism name" value="human"/>
</dbReference>
<dbReference type="AGR" id="HGNC:15828"/>
<dbReference type="CTD" id="51655"/>
<dbReference type="DisGeNET" id="51655"/>
<dbReference type="GeneCards" id="RASD1"/>
<dbReference type="HGNC" id="HGNC:15828">
    <property type="gene designation" value="RASD1"/>
</dbReference>
<dbReference type="HPA" id="ENSG00000108551">
    <property type="expression patterns" value="Tissue enhanced (pituitary)"/>
</dbReference>
<dbReference type="MIM" id="605550">
    <property type="type" value="gene"/>
</dbReference>
<dbReference type="neXtProt" id="NX_Q9Y272"/>
<dbReference type="OpenTargets" id="ENSG00000108551"/>
<dbReference type="PharmGKB" id="PA34236"/>
<dbReference type="VEuPathDB" id="HostDB:ENSG00000108551"/>
<dbReference type="eggNOG" id="KOG0395">
    <property type="taxonomic scope" value="Eukaryota"/>
</dbReference>
<dbReference type="GeneTree" id="ENSGT00940000161274"/>
<dbReference type="HOGENOM" id="CLU_041217_9_3_1"/>
<dbReference type="InParanoid" id="Q9Y272"/>
<dbReference type="OMA" id="VSIQYCD"/>
<dbReference type="OrthoDB" id="265044at2759"/>
<dbReference type="PAN-GO" id="Q9Y272">
    <property type="GO annotations" value="3 GO annotations based on evolutionary models"/>
</dbReference>
<dbReference type="PhylomeDB" id="Q9Y272"/>
<dbReference type="TreeFam" id="TF316238"/>
<dbReference type="PathwayCommons" id="Q9Y272"/>
<dbReference type="SignaLink" id="Q9Y272"/>
<dbReference type="BioGRID-ORCS" id="51655">
    <property type="hits" value="17 hits in 1151 CRISPR screens"/>
</dbReference>
<dbReference type="ChiTaRS" id="RASD1">
    <property type="organism name" value="human"/>
</dbReference>
<dbReference type="GeneWiki" id="RASD1"/>
<dbReference type="GenomeRNAi" id="51655"/>
<dbReference type="Pharos" id="Q9Y272">
    <property type="development level" value="Tbio"/>
</dbReference>
<dbReference type="PRO" id="PR:Q9Y272"/>
<dbReference type="Proteomes" id="UP000005640">
    <property type="component" value="Chromosome 17"/>
</dbReference>
<dbReference type="RNAct" id="Q9Y272">
    <property type="molecule type" value="protein"/>
</dbReference>
<dbReference type="Bgee" id="ENSG00000108551">
    <property type="expression patterns" value="Expressed in pericardium and 177 other cell types or tissues"/>
</dbReference>
<dbReference type="GO" id="GO:0005737">
    <property type="term" value="C:cytoplasm"/>
    <property type="evidence" value="ECO:0000318"/>
    <property type="project" value="GO_Central"/>
</dbReference>
<dbReference type="GO" id="GO:0005634">
    <property type="term" value="C:nucleus"/>
    <property type="evidence" value="ECO:0007669"/>
    <property type="project" value="UniProtKB-SubCell"/>
</dbReference>
<dbReference type="GO" id="GO:0048471">
    <property type="term" value="C:perinuclear region of cytoplasm"/>
    <property type="evidence" value="ECO:0007669"/>
    <property type="project" value="UniProtKB-SubCell"/>
</dbReference>
<dbReference type="GO" id="GO:0005886">
    <property type="term" value="C:plasma membrane"/>
    <property type="evidence" value="ECO:0007669"/>
    <property type="project" value="UniProtKB-SubCell"/>
</dbReference>
<dbReference type="GO" id="GO:0016529">
    <property type="term" value="C:sarcoplasmic reticulum"/>
    <property type="evidence" value="ECO:0007669"/>
    <property type="project" value="Ensembl"/>
</dbReference>
<dbReference type="GO" id="GO:0031681">
    <property type="term" value="F:G-protein beta-subunit binding"/>
    <property type="evidence" value="ECO:0000318"/>
    <property type="project" value="GO_Central"/>
</dbReference>
<dbReference type="GO" id="GO:0005525">
    <property type="term" value="F:GTP binding"/>
    <property type="evidence" value="ECO:0007669"/>
    <property type="project" value="UniProtKB-KW"/>
</dbReference>
<dbReference type="GO" id="GO:0003924">
    <property type="term" value="F:GTPase activity"/>
    <property type="evidence" value="ECO:0000304"/>
    <property type="project" value="ProtInc"/>
</dbReference>
<dbReference type="GO" id="GO:0007186">
    <property type="term" value="P:G protein-coupled receptor signaling pathway"/>
    <property type="evidence" value="ECO:0000304"/>
    <property type="project" value="ProtInc"/>
</dbReference>
<dbReference type="GO" id="GO:0045892">
    <property type="term" value="P:negative regulation of DNA-templated transcription"/>
    <property type="evidence" value="ECO:0007669"/>
    <property type="project" value="Ensembl"/>
</dbReference>
<dbReference type="GO" id="GO:0007263">
    <property type="term" value="P:nitric oxide mediated signal transduction"/>
    <property type="evidence" value="ECO:0007669"/>
    <property type="project" value="Ensembl"/>
</dbReference>
<dbReference type="GO" id="GO:0007165">
    <property type="term" value="P:signal transduction"/>
    <property type="evidence" value="ECO:0000318"/>
    <property type="project" value="GO_Central"/>
</dbReference>
<dbReference type="CDD" id="cd04143">
    <property type="entry name" value="Rhes_like"/>
    <property type="match status" value="1"/>
</dbReference>
<dbReference type="FunFam" id="3.40.50.300:FF:000475">
    <property type="entry name" value="GTP-binding protein Rhes"/>
    <property type="match status" value="1"/>
</dbReference>
<dbReference type="Gene3D" id="3.40.50.300">
    <property type="entry name" value="P-loop containing nucleotide triphosphate hydrolases"/>
    <property type="match status" value="1"/>
</dbReference>
<dbReference type="InterPro" id="IPR027417">
    <property type="entry name" value="P-loop_NTPase"/>
</dbReference>
<dbReference type="InterPro" id="IPR005225">
    <property type="entry name" value="Small_GTP-bd"/>
</dbReference>
<dbReference type="InterPro" id="IPR001806">
    <property type="entry name" value="Small_GTPase"/>
</dbReference>
<dbReference type="InterPro" id="IPR052236">
    <property type="entry name" value="Small_GTPase_RasD"/>
</dbReference>
<dbReference type="NCBIfam" id="TIGR00231">
    <property type="entry name" value="small_GTP"/>
    <property type="match status" value="1"/>
</dbReference>
<dbReference type="PANTHER" id="PTHR46149:SF4">
    <property type="entry name" value="DEXAMETHASONE-INDUCED RAS-RELATED PROTEIN 1"/>
    <property type="match status" value="1"/>
</dbReference>
<dbReference type="PANTHER" id="PTHR46149">
    <property type="entry name" value="MIP08469P"/>
    <property type="match status" value="1"/>
</dbReference>
<dbReference type="Pfam" id="PF00071">
    <property type="entry name" value="Ras"/>
    <property type="match status" value="1"/>
</dbReference>
<dbReference type="PRINTS" id="PR00449">
    <property type="entry name" value="RASTRNSFRMNG"/>
</dbReference>
<dbReference type="SMART" id="SM00175">
    <property type="entry name" value="RAB"/>
    <property type="match status" value="1"/>
</dbReference>
<dbReference type="SMART" id="SM00176">
    <property type="entry name" value="RAN"/>
    <property type="match status" value="1"/>
</dbReference>
<dbReference type="SMART" id="SM00173">
    <property type="entry name" value="RAS"/>
    <property type="match status" value="1"/>
</dbReference>
<dbReference type="SMART" id="SM00174">
    <property type="entry name" value="RHO"/>
    <property type="match status" value="1"/>
</dbReference>
<dbReference type="SUPFAM" id="SSF52540">
    <property type="entry name" value="P-loop containing nucleoside triphosphate hydrolases"/>
    <property type="match status" value="1"/>
</dbReference>
<dbReference type="PROSITE" id="PS51421">
    <property type="entry name" value="RAS"/>
    <property type="match status" value="1"/>
</dbReference>
<organism>
    <name type="scientific">Homo sapiens</name>
    <name type="common">Human</name>
    <dbReference type="NCBI Taxonomy" id="9606"/>
    <lineage>
        <taxon>Eukaryota</taxon>
        <taxon>Metazoa</taxon>
        <taxon>Chordata</taxon>
        <taxon>Craniata</taxon>
        <taxon>Vertebrata</taxon>
        <taxon>Euteleostomi</taxon>
        <taxon>Mammalia</taxon>
        <taxon>Eutheria</taxon>
        <taxon>Euarchontoglires</taxon>
        <taxon>Primates</taxon>
        <taxon>Haplorrhini</taxon>
        <taxon>Catarrhini</taxon>
        <taxon>Hominidae</taxon>
        <taxon>Homo</taxon>
    </lineage>
</organism>
<accession>Q9Y272</accession>
<accession>B2R709</accession>
<accession>B4DFF4</accession>
<accession>Q9NYB4</accession>
<proteinExistence type="evidence at protein level"/>
<evidence type="ECO:0000250" key="1"/>
<evidence type="ECO:0000269" key="2">
    <source>
    </source>
</evidence>
<evidence type="ECO:0000269" key="3">
    <source>
    </source>
</evidence>
<evidence type="ECO:0000269" key="4">
    <source>
    </source>
</evidence>
<evidence type="ECO:0000303" key="5">
    <source>
    </source>
</evidence>
<evidence type="ECO:0000305" key="6"/>
<gene>
    <name type="primary">RASD1</name>
    <name type="synonym">AGS1</name>
    <name type="synonym">DEXRAS1</name>
</gene>
<protein>
    <recommendedName>
        <fullName>Dexamethasone-induced Ras-related protein 1</fullName>
    </recommendedName>
    <alternativeName>
        <fullName>Activator of G-protein signaling 1</fullName>
    </alternativeName>
</protein>
<comment type="function">
    <text evidence="1">Small GTPase. Negatively regulates the transcription regulation activity of the APBB1/FE65-APP complex via its interaction with APBB1/FE65 (By similarity).</text>
</comment>
<comment type="subunit">
    <text evidence="1">Forms a ternary complex with CAPON and NOS1. Component of a complex, at least composed of APBB1, RASD1/DEXRAS1 and APP. Interacts with APBB1/FE65 (By similarity).</text>
</comment>
<comment type="interaction">
    <interactant intactId="EBI-740818">
        <id>Q9Y272</id>
    </interactant>
    <interactant intactId="EBI-11096309">
        <id>Q9NYB9-2</id>
        <label>ABI2</label>
    </interactant>
    <organismsDiffer>false</organismsDiffer>
    <experiments>3</experiments>
</comment>
<comment type="interaction">
    <interactant intactId="EBI-740818">
        <id>Q9Y272</id>
    </interactant>
    <interactant intactId="EBI-77613">
        <id>P05067</id>
        <label>APP</label>
    </interactant>
    <organismsDiffer>false</organismsDiffer>
    <experiments>3</experiments>
</comment>
<comment type="interaction">
    <interactant intactId="EBI-740818">
        <id>Q9Y272</id>
    </interactant>
    <interactant intactId="EBI-10961624">
        <id>Q2TAC2-2</id>
        <label>CCDC57</label>
    </interactant>
    <organismsDiffer>false</organismsDiffer>
    <experiments>3</experiments>
</comment>
<comment type="interaction">
    <interactant intactId="EBI-740818">
        <id>Q9Y272</id>
    </interactant>
    <interactant intactId="EBI-11063830">
        <id>Q86X02</id>
        <label>CDR2L</label>
    </interactant>
    <organismsDiffer>false</organismsDiffer>
    <experiments>3</experiments>
</comment>
<comment type="interaction">
    <interactant intactId="EBI-740818">
        <id>Q9Y272</id>
    </interactant>
    <interactant intactId="EBI-3867333">
        <id>A8MQ03</id>
        <label>CYSRT1</label>
    </interactant>
    <organismsDiffer>false</organismsDiffer>
    <experiments>3</experiments>
</comment>
<comment type="interaction">
    <interactant intactId="EBI-740818">
        <id>Q9Y272</id>
    </interactant>
    <interactant intactId="EBI-371922">
        <id>Q96B26</id>
        <label>EXOSC8</label>
    </interactant>
    <organismsDiffer>false</organismsDiffer>
    <experiments>3</experiments>
</comment>
<comment type="interaction">
    <interactant intactId="EBI-740818">
        <id>Q9Y272</id>
    </interactant>
    <interactant intactId="EBI-304185">
        <id>P61978</id>
        <label>HNRNPK</label>
    </interactant>
    <organismsDiffer>false</organismsDiffer>
    <experiments>6</experiments>
</comment>
<comment type="interaction">
    <interactant intactId="EBI-740818">
        <id>Q9Y272</id>
    </interactant>
    <interactant intactId="EBI-7060731">
        <id>P61978-2</id>
        <label>HNRNPK</label>
    </interactant>
    <organismsDiffer>false</organismsDiffer>
    <experiments>3</experiments>
</comment>
<comment type="interaction">
    <interactant intactId="EBI-740818">
        <id>Q9Y272</id>
    </interactant>
    <interactant intactId="EBI-12236340">
        <id>O43390-2</id>
        <label>HNRNPR</label>
    </interactant>
    <organismsDiffer>false</organismsDiffer>
    <experiments>3</experiments>
</comment>
<comment type="interaction">
    <interactant intactId="EBI-740818">
        <id>Q9Y272</id>
    </interactant>
    <interactant intactId="EBI-722504">
        <id>O75525</id>
        <label>KHDRBS3</label>
    </interactant>
    <organismsDiffer>false</organismsDiffer>
    <experiments>3</experiments>
</comment>
<comment type="interaction">
    <interactant intactId="EBI-740818">
        <id>Q9Y272</id>
    </interactant>
    <interactant intactId="EBI-1047093">
        <id>O76011</id>
        <label>KRT34</label>
    </interactant>
    <organismsDiffer>false</organismsDiffer>
    <experiments>3</experiments>
</comment>
<comment type="interaction">
    <interactant intactId="EBI-740818">
        <id>Q9Y272</id>
    </interactant>
    <interactant intactId="EBI-11749135">
        <id>Q8IUG1</id>
        <label>KRTAP1-3</label>
    </interactant>
    <organismsDiffer>false</organismsDiffer>
    <experiments>3</experiments>
</comment>
<comment type="interaction">
    <interactant intactId="EBI-740818">
        <id>Q9Y272</id>
    </interactant>
    <interactant intactId="EBI-10171774">
        <id>P60410</id>
        <label>KRTAP10-8</label>
    </interactant>
    <organismsDiffer>false</organismsDiffer>
    <experiments>3</experiments>
</comment>
<comment type="interaction">
    <interactant intactId="EBI-740818">
        <id>Q9Y272</id>
    </interactant>
    <interactant intactId="EBI-10172052">
        <id>P60411</id>
        <label>KRTAP10-9</label>
    </interactant>
    <organismsDiffer>false</organismsDiffer>
    <experiments>3</experiments>
</comment>
<comment type="interaction">
    <interactant intactId="EBI-740818">
        <id>Q9Y272</id>
    </interactant>
    <interactant intactId="EBI-3957672">
        <id>Q6PEX3</id>
        <label>KRTAP26-1</label>
    </interactant>
    <organismsDiffer>false</organismsDiffer>
    <experiments>3</experiments>
</comment>
<comment type="interaction">
    <interactant intactId="EBI-740818">
        <id>Q9Y272</id>
    </interactant>
    <interactant intactId="EBI-3958099">
        <id>P26371</id>
        <label>KRTAP5-9</label>
    </interactant>
    <organismsDiffer>false</organismsDiffer>
    <experiments>3</experiments>
</comment>
<comment type="interaction">
    <interactant intactId="EBI-740818">
        <id>Q9Y272</id>
    </interactant>
    <interactant intactId="EBI-11962084">
        <id>Q3LI66</id>
        <label>KRTAP6-2</label>
    </interactant>
    <organismsDiffer>false</organismsDiffer>
    <experiments>3</experiments>
</comment>
<comment type="interaction">
    <interactant intactId="EBI-740818">
        <id>Q9Y272</id>
    </interactant>
    <interactant intactId="EBI-22311199">
        <id>Q3LI67</id>
        <label>KRTAP6-3</label>
    </interactant>
    <organismsDiffer>false</organismsDiffer>
    <experiments>3</experiments>
</comment>
<comment type="interaction">
    <interactant intactId="EBI-740818">
        <id>Q9Y272</id>
    </interactant>
    <interactant intactId="EBI-352602">
        <id>P43243</id>
        <label>MATR3</label>
    </interactant>
    <organismsDiffer>false</organismsDiffer>
    <experiments>6</experiments>
</comment>
<comment type="interaction">
    <interactant intactId="EBI-740818">
        <id>Q9Y272</id>
    </interactant>
    <interactant intactId="EBI-724076">
        <id>Q99750</id>
        <label>MDFI</label>
    </interactant>
    <organismsDiffer>false</organismsDiffer>
    <experiments>5</experiments>
</comment>
<comment type="interaction">
    <interactant intactId="EBI-740818">
        <id>Q9Y272</id>
    </interactant>
    <interactant intactId="EBI-2340269">
        <id>Q13064</id>
        <label>MKRN3</label>
    </interactant>
    <organismsDiffer>false</organismsDiffer>
    <experiments>3</experiments>
</comment>
<comment type="interaction">
    <interactant intactId="EBI-740818">
        <id>Q9Y272</id>
    </interactant>
    <interactant intactId="EBI-11522433">
        <id>Q5JR59-3</id>
        <label>MTUS2</label>
    </interactant>
    <organismsDiffer>false</organismsDiffer>
    <experiments>3</experiments>
</comment>
<comment type="interaction">
    <interactant intactId="EBI-740818">
        <id>Q9Y272</id>
    </interactant>
    <interactant intactId="EBI-22310682">
        <id>P0DPK4</id>
        <label>NOTCH2NLC</label>
    </interactant>
    <organismsDiffer>false</organismsDiffer>
    <experiments>3</experiments>
</comment>
<comment type="interaction">
    <interactant intactId="EBI-740818">
        <id>Q9Y272</id>
    </interactant>
    <interactant intactId="EBI-12859340">
        <id>Q9NQX1-2</id>
        <label>PRDM5</label>
    </interactant>
    <organismsDiffer>false</organismsDiffer>
    <experiments>3</experiments>
</comment>
<comment type="interaction">
    <interactant intactId="EBI-740818">
        <id>Q9Y272</id>
    </interactant>
    <interactant intactId="EBI-2860264">
        <id>Q16825</id>
        <label>PTPN21</label>
    </interactant>
    <organismsDiffer>false</organismsDiffer>
    <experiments>3</experiments>
</comment>
<comment type="interaction">
    <interactant intactId="EBI-740818">
        <id>Q9Y272</id>
    </interactant>
    <interactant intactId="EBI-3437896">
        <id>Q86YV0</id>
        <label>RASAL3</label>
    </interactant>
    <organismsDiffer>false</organismsDiffer>
    <experiments>3</experiments>
</comment>
<comment type="interaction">
    <interactant intactId="EBI-740818">
        <id>Q9Y272</id>
    </interactant>
    <interactant intactId="EBI-11994018">
        <id>P0DJD3-2</id>
        <label>RBMY1A1</label>
    </interactant>
    <organismsDiffer>false</organismsDiffer>
    <experiments>3</experiments>
</comment>
<comment type="interaction">
    <interactant intactId="EBI-740818">
        <id>Q9Y272</id>
    </interactant>
    <interactant intactId="EBI-8642021">
        <id>Q15415</id>
        <label>RBMY1J</label>
    </interactant>
    <organismsDiffer>false</organismsDiffer>
    <experiments>6</experiments>
</comment>
<comment type="interaction">
    <interactant intactId="EBI-740818">
        <id>Q9Y272</id>
    </interactant>
    <interactant intactId="EBI-741602">
        <id>O94972</id>
        <label>TRIM37</label>
    </interactant>
    <organismsDiffer>false</organismsDiffer>
    <experiments>3</experiments>
</comment>
<comment type="interaction">
    <interactant intactId="EBI-740818">
        <id>Q9Y272</id>
    </interactant>
    <interactant intactId="EBI-743923">
        <id>O00308</id>
        <label>WWP2</label>
    </interactant>
    <organismsDiffer>false</organismsDiffer>
    <experiments>3</experiments>
</comment>
<comment type="subcellular location">
    <subcellularLocation>
        <location evidence="6">Cell membrane</location>
        <topology evidence="6">Lipid-anchor</topology>
        <orientation evidence="6">Cytoplasmic side</orientation>
    </subcellularLocation>
    <subcellularLocation>
        <location evidence="1">Cytoplasm</location>
        <location evidence="1">Perinuclear region</location>
    </subcellularLocation>
    <subcellularLocation>
        <location evidence="1">Nucleus</location>
    </subcellularLocation>
</comment>
<comment type="alternative products">
    <event type="alternative splicing"/>
    <isoform>
        <id>Q9Y272-1</id>
        <name>1</name>
        <sequence type="displayed"/>
    </isoform>
    <isoform>
        <id>Q9Y272-2</id>
        <name>2</name>
        <sequence type="described" ref="VSP_046431 VSP_046432"/>
    </isoform>
</comment>
<comment type="tissue specificity">
    <text evidence="2 4">Expressed in a variety of tissues including heart, cardiovascular tissues, brain, placenta, lung, liver, skeletal muscle, kidney, pancreas, gastrointestinal and reproductive tissues.</text>
</comment>
<comment type="induction">
    <text evidence="2">By dexamethasone.</text>
</comment>
<comment type="PTM">
    <text evidence="3">S-nitrosylation stimulates guanine-nucleotide exchange activity.</text>
</comment>
<comment type="similarity">
    <text evidence="6">Belongs to the small GTPase superfamily. RasD family.</text>
</comment>
<reference key="1">
    <citation type="submission" date="1999-05" db="EMBL/GenBank/DDBJ databases">
        <title>Identification of human pituitary Dexras1.</title>
        <authorList>
            <person name="Kemppainen R.J."/>
        </authorList>
    </citation>
    <scope>NUCLEOTIDE SEQUENCE [MRNA] (ISOFORM 1)</scope>
    <source>
        <tissue>Pituitary</tissue>
    </source>
</reference>
<reference key="2">
    <citation type="journal article" date="1999" name="Biochim. Biophys. Acta">
        <title>Cloning, expression and characterization of a novel human Ras-related protein that is regulated by glucocorticoid hormone.</title>
        <authorList>
            <person name="Tu Y."/>
            <person name="Wu C."/>
        </authorList>
    </citation>
    <scope>NUCLEOTIDE SEQUENCE [MRNA] (ISOFORM 1)</scope>
    <scope>TISSUE SPECIFICITY</scope>
    <scope>INDUCTION</scope>
</reference>
<reference key="3">
    <citation type="journal article" date="1999" name="Nat. Biotechnol.">
        <title>Genetic screens in yeast to identify mammalian nonreceptor modulators of G-protein signaling.</title>
        <authorList>
            <person name="Cismowski M.J."/>
            <person name="Takesono A."/>
            <person name="Ma C."/>
            <person name="Lizano J.S."/>
            <person name="Xie X."/>
            <person name="Fuernkranz H."/>
            <person name="Lanier S.M."/>
            <person name="Duzic E."/>
        </authorList>
    </citation>
    <scope>NUCLEOTIDE SEQUENCE [MRNA] (ISOFORM 1)</scope>
    <source>
        <tissue>Liver</tissue>
    </source>
</reference>
<reference key="4">
    <citation type="submission" date="2000-01" db="EMBL/GenBank/DDBJ databases">
        <title>Genomic sequence of the human ras-related G-protein activator AGS1.</title>
        <authorList>
            <person name="Cismowski M.J."/>
            <person name="Xie X."/>
            <person name="Duzic E."/>
        </authorList>
    </citation>
    <scope>NUCLEOTIDE SEQUENCE [GENOMIC DNA]</scope>
</reference>
<reference key="5">
    <citation type="journal article" date="2003" name="Biochim. Biophys. Acta">
        <title>Identification of a glucocorticoid response element in the 3'-flanking region of the human Dexras1 gene.</title>
        <authorList>
            <person name="Kemppainen R.J."/>
            <person name="Cox E."/>
            <person name="Behrend E.N."/>
            <person name="Brogan M.D."/>
            <person name="Ammons J.M."/>
        </authorList>
    </citation>
    <scope>NUCLEOTIDE SEQUENCE [GENOMIC DNA]</scope>
    <scope>TISSUE SPECIFICITY</scope>
</reference>
<reference key="6">
    <citation type="submission" date="2002-04" db="EMBL/GenBank/DDBJ databases">
        <title>cDNA clones of human proteins involved in signal transduction sequenced by the Guthrie cDNA resource center (www.cdna.org).</title>
        <authorList>
            <person name="Puhl H.L. III"/>
            <person name="Ikeda S.R."/>
            <person name="Aronstam R.S."/>
        </authorList>
    </citation>
    <scope>NUCLEOTIDE SEQUENCE [LARGE SCALE MRNA] (ISOFORM 1)</scope>
    <source>
        <tissue>Brain</tissue>
    </source>
</reference>
<reference key="7">
    <citation type="journal article" date="2004" name="Nat. Genet.">
        <title>Complete sequencing and characterization of 21,243 full-length human cDNAs.</title>
        <authorList>
            <person name="Ota T."/>
            <person name="Suzuki Y."/>
            <person name="Nishikawa T."/>
            <person name="Otsuki T."/>
            <person name="Sugiyama T."/>
            <person name="Irie R."/>
            <person name="Wakamatsu A."/>
            <person name="Hayashi K."/>
            <person name="Sato H."/>
            <person name="Nagai K."/>
            <person name="Kimura K."/>
            <person name="Makita H."/>
            <person name="Sekine M."/>
            <person name="Obayashi M."/>
            <person name="Nishi T."/>
            <person name="Shibahara T."/>
            <person name="Tanaka T."/>
            <person name="Ishii S."/>
            <person name="Yamamoto J."/>
            <person name="Saito K."/>
            <person name="Kawai Y."/>
            <person name="Isono Y."/>
            <person name="Nakamura Y."/>
            <person name="Nagahari K."/>
            <person name="Murakami K."/>
            <person name="Yasuda T."/>
            <person name="Iwayanagi T."/>
            <person name="Wagatsuma M."/>
            <person name="Shiratori A."/>
            <person name="Sudo H."/>
            <person name="Hosoiri T."/>
            <person name="Kaku Y."/>
            <person name="Kodaira H."/>
            <person name="Kondo H."/>
            <person name="Sugawara M."/>
            <person name="Takahashi M."/>
            <person name="Kanda K."/>
            <person name="Yokoi T."/>
            <person name="Furuya T."/>
            <person name="Kikkawa E."/>
            <person name="Omura Y."/>
            <person name="Abe K."/>
            <person name="Kamihara K."/>
            <person name="Katsuta N."/>
            <person name="Sato K."/>
            <person name="Tanikawa M."/>
            <person name="Yamazaki M."/>
            <person name="Ninomiya K."/>
            <person name="Ishibashi T."/>
            <person name="Yamashita H."/>
            <person name="Murakawa K."/>
            <person name="Fujimori K."/>
            <person name="Tanai H."/>
            <person name="Kimata M."/>
            <person name="Watanabe M."/>
            <person name="Hiraoka S."/>
            <person name="Chiba Y."/>
            <person name="Ishida S."/>
            <person name="Ono Y."/>
            <person name="Takiguchi S."/>
            <person name="Watanabe S."/>
            <person name="Yosida M."/>
            <person name="Hotuta T."/>
            <person name="Kusano J."/>
            <person name="Kanehori K."/>
            <person name="Takahashi-Fujii A."/>
            <person name="Hara H."/>
            <person name="Tanase T.-O."/>
            <person name="Nomura Y."/>
            <person name="Togiya S."/>
            <person name="Komai F."/>
            <person name="Hara R."/>
            <person name="Takeuchi K."/>
            <person name="Arita M."/>
            <person name="Imose N."/>
            <person name="Musashino K."/>
            <person name="Yuuki H."/>
            <person name="Oshima A."/>
            <person name="Sasaki N."/>
            <person name="Aotsuka S."/>
            <person name="Yoshikawa Y."/>
            <person name="Matsunawa H."/>
            <person name="Ichihara T."/>
            <person name="Shiohata N."/>
            <person name="Sano S."/>
            <person name="Moriya S."/>
            <person name="Momiyama H."/>
            <person name="Satoh N."/>
            <person name="Takami S."/>
            <person name="Terashima Y."/>
            <person name="Suzuki O."/>
            <person name="Nakagawa S."/>
            <person name="Senoh A."/>
            <person name="Mizoguchi H."/>
            <person name="Goto Y."/>
            <person name="Shimizu F."/>
            <person name="Wakebe H."/>
            <person name="Hishigaki H."/>
            <person name="Watanabe T."/>
            <person name="Sugiyama A."/>
            <person name="Takemoto M."/>
            <person name="Kawakami B."/>
            <person name="Yamazaki M."/>
            <person name="Watanabe K."/>
            <person name="Kumagai A."/>
            <person name="Itakura S."/>
            <person name="Fukuzumi Y."/>
            <person name="Fujimori Y."/>
            <person name="Komiyama M."/>
            <person name="Tashiro H."/>
            <person name="Tanigami A."/>
            <person name="Fujiwara T."/>
            <person name="Ono T."/>
            <person name="Yamada K."/>
            <person name="Fujii Y."/>
            <person name="Ozaki K."/>
            <person name="Hirao M."/>
            <person name="Ohmori Y."/>
            <person name="Kawabata A."/>
            <person name="Hikiji T."/>
            <person name="Kobatake N."/>
            <person name="Inagaki H."/>
            <person name="Ikema Y."/>
            <person name="Okamoto S."/>
            <person name="Okitani R."/>
            <person name="Kawakami T."/>
            <person name="Noguchi S."/>
            <person name="Itoh T."/>
            <person name="Shigeta K."/>
            <person name="Senba T."/>
            <person name="Matsumura K."/>
            <person name="Nakajima Y."/>
            <person name="Mizuno T."/>
            <person name="Morinaga M."/>
            <person name="Sasaki M."/>
            <person name="Togashi T."/>
            <person name="Oyama M."/>
            <person name="Hata H."/>
            <person name="Watanabe M."/>
            <person name="Komatsu T."/>
            <person name="Mizushima-Sugano J."/>
            <person name="Satoh T."/>
            <person name="Shirai Y."/>
            <person name="Takahashi Y."/>
            <person name="Nakagawa K."/>
            <person name="Okumura K."/>
            <person name="Nagase T."/>
            <person name="Nomura N."/>
            <person name="Kikuchi H."/>
            <person name="Masuho Y."/>
            <person name="Yamashita R."/>
            <person name="Nakai K."/>
            <person name="Yada T."/>
            <person name="Nakamura Y."/>
            <person name="Ohara O."/>
            <person name="Isogai T."/>
            <person name="Sugano S."/>
        </authorList>
    </citation>
    <scope>NUCLEOTIDE SEQUENCE [LARGE SCALE MRNA] (ISOFORMS 1 AND 2)</scope>
    <source>
        <tissue>Brain cortex</tissue>
        <tissue>Testis</tissue>
    </source>
</reference>
<reference key="8">
    <citation type="journal article" date="2006" name="Nature">
        <title>DNA sequence of human chromosome 17 and analysis of rearrangement in the human lineage.</title>
        <authorList>
            <person name="Zody M.C."/>
            <person name="Garber M."/>
            <person name="Adams D.J."/>
            <person name="Sharpe T."/>
            <person name="Harrow J."/>
            <person name="Lupski J.R."/>
            <person name="Nicholson C."/>
            <person name="Searle S.M."/>
            <person name="Wilming L."/>
            <person name="Young S.K."/>
            <person name="Abouelleil A."/>
            <person name="Allen N.R."/>
            <person name="Bi W."/>
            <person name="Bloom T."/>
            <person name="Borowsky M.L."/>
            <person name="Bugalter B.E."/>
            <person name="Butler J."/>
            <person name="Chang J.L."/>
            <person name="Chen C.-K."/>
            <person name="Cook A."/>
            <person name="Corum B."/>
            <person name="Cuomo C.A."/>
            <person name="de Jong P.J."/>
            <person name="DeCaprio D."/>
            <person name="Dewar K."/>
            <person name="FitzGerald M."/>
            <person name="Gilbert J."/>
            <person name="Gibson R."/>
            <person name="Gnerre S."/>
            <person name="Goldstein S."/>
            <person name="Grafham D.V."/>
            <person name="Grocock R."/>
            <person name="Hafez N."/>
            <person name="Hagopian D.S."/>
            <person name="Hart E."/>
            <person name="Norman C.H."/>
            <person name="Humphray S."/>
            <person name="Jaffe D.B."/>
            <person name="Jones M."/>
            <person name="Kamal M."/>
            <person name="Khodiyar V.K."/>
            <person name="LaButti K."/>
            <person name="Laird G."/>
            <person name="Lehoczky J."/>
            <person name="Liu X."/>
            <person name="Lokyitsang T."/>
            <person name="Loveland J."/>
            <person name="Lui A."/>
            <person name="Macdonald P."/>
            <person name="Major J.E."/>
            <person name="Matthews L."/>
            <person name="Mauceli E."/>
            <person name="McCarroll S.A."/>
            <person name="Mihalev A.H."/>
            <person name="Mudge J."/>
            <person name="Nguyen C."/>
            <person name="Nicol R."/>
            <person name="O'Leary S.B."/>
            <person name="Osoegawa K."/>
            <person name="Schwartz D.C."/>
            <person name="Shaw-Smith C."/>
            <person name="Stankiewicz P."/>
            <person name="Steward C."/>
            <person name="Swarbreck D."/>
            <person name="Venkataraman V."/>
            <person name="Whittaker C.A."/>
            <person name="Yang X."/>
            <person name="Zimmer A.R."/>
            <person name="Bradley A."/>
            <person name="Hubbard T."/>
            <person name="Birren B.W."/>
            <person name="Rogers J."/>
            <person name="Lander E.S."/>
            <person name="Nusbaum C."/>
        </authorList>
    </citation>
    <scope>NUCLEOTIDE SEQUENCE [LARGE SCALE GENOMIC DNA]</scope>
</reference>
<reference key="9">
    <citation type="submission" date="2005-09" db="EMBL/GenBank/DDBJ databases">
        <authorList>
            <person name="Mural R.J."/>
            <person name="Istrail S."/>
            <person name="Sutton G.G."/>
            <person name="Florea L."/>
            <person name="Halpern A.L."/>
            <person name="Mobarry C.M."/>
            <person name="Lippert R."/>
            <person name="Walenz B."/>
            <person name="Shatkay H."/>
            <person name="Dew I."/>
            <person name="Miller J.R."/>
            <person name="Flanigan M.J."/>
            <person name="Edwards N.J."/>
            <person name="Bolanos R."/>
            <person name="Fasulo D."/>
            <person name="Halldorsson B.V."/>
            <person name="Hannenhalli S."/>
            <person name="Turner R."/>
            <person name="Yooseph S."/>
            <person name="Lu F."/>
            <person name="Nusskern D.R."/>
            <person name="Shue B.C."/>
            <person name="Zheng X.H."/>
            <person name="Zhong F."/>
            <person name="Delcher A.L."/>
            <person name="Huson D.H."/>
            <person name="Kravitz S.A."/>
            <person name="Mouchard L."/>
            <person name="Reinert K."/>
            <person name="Remington K.A."/>
            <person name="Clark A.G."/>
            <person name="Waterman M.S."/>
            <person name="Eichler E.E."/>
            <person name="Adams M.D."/>
            <person name="Hunkapiller M.W."/>
            <person name="Myers E.W."/>
            <person name="Venter J.C."/>
        </authorList>
    </citation>
    <scope>NUCLEOTIDE SEQUENCE [LARGE SCALE GENOMIC DNA]</scope>
</reference>
<reference key="10">
    <citation type="journal article" date="2004" name="Genome Res.">
        <title>The status, quality, and expansion of the NIH full-length cDNA project: the Mammalian Gene Collection (MGC).</title>
        <authorList>
            <consortium name="The MGC Project Team"/>
        </authorList>
    </citation>
    <scope>NUCLEOTIDE SEQUENCE [LARGE SCALE MRNA] (ISOFORM 1)</scope>
    <source>
        <tissue>Brain</tissue>
    </source>
</reference>
<reference key="11">
    <citation type="journal article" date="2002" name="Chem. Biol.">
        <title>Nitrosopeptide mapping: a novel methodology reveals s-nitrosylation of dexras1 on a single cysteine residue.</title>
        <authorList>
            <person name="Jaffrey S.R."/>
            <person name="Fang M."/>
            <person name="Snyder S.H."/>
        </authorList>
    </citation>
    <scope>S-NITROSYLATION AT CYS-11</scope>
    <scope>MUTAGENESIS OF CYS-11</scope>
</reference>
<sequence length="281" mass="31642">MKLAAMIKKMCPSDSELSIPAKNCYRMVILGSSKVGKTAIVSRFLTGRFEDAYTPTIEDFHRKFYSIRGEVYQLDILDTSGNHPFPAMRRLSILTGDVFILVFSLDNRDSFEEVQRLRQQILDTKSCLKNKTKENVDVPLVICGNKGDRDFYREVDQREIEQLVGDDPQRCAYFEISAKKNSSLDQMFRALFAMAKLPSEMSPDLHRKVSVQYCDVLHKKALRNKKLLRAGSGGGGGDPGDAFGIVAPFARRPSVHSDLMYIREKASAGSQAKDKERCVIS</sequence>